<protein>
    <recommendedName>
        <fullName>1-deoxy-11-beta-hydroxypentalenate dehydrogenase</fullName>
        <ecNumber>1.1.1.340</ecNumber>
    </recommendedName>
    <alternativeName>
        <fullName>Neopentalenolactone biosynthesis protein F</fullName>
    </alternativeName>
</protein>
<feature type="chain" id="PRO_0000421997" description="1-deoxy-11-beta-hydroxypentalenate dehydrogenase">
    <location>
        <begin position="1"/>
        <end position="270"/>
    </location>
</feature>
<feature type="active site" description="Proton acceptor" evidence="1">
    <location>
        <position position="157"/>
    </location>
</feature>
<feature type="binding site" evidence="1">
    <location>
        <begin position="12"/>
        <end position="36"/>
    </location>
    <ligand>
        <name>NAD(+)</name>
        <dbReference type="ChEBI" id="CHEBI:57540"/>
    </ligand>
</feature>
<feature type="binding site" evidence="1">
    <location>
        <position position="144"/>
    </location>
    <ligand>
        <name>substrate</name>
    </ligand>
</feature>
<feature type="binding site" evidence="1">
    <location>
        <position position="161"/>
    </location>
    <ligand>
        <name>NAD(+)</name>
        <dbReference type="ChEBI" id="CHEBI:57540"/>
    </ligand>
</feature>
<reference key="1">
    <citation type="journal article" date="2001" name="Proc. Natl. Acad. Sci. U.S.A.">
        <title>Genome sequence of an industrial microorganism Streptomyces avermitilis: deducing the ability of producing secondary metabolites.</title>
        <authorList>
            <person name="Omura S."/>
            <person name="Ikeda H."/>
            <person name="Ishikawa J."/>
            <person name="Hanamoto A."/>
            <person name="Takahashi C."/>
            <person name="Shinose M."/>
            <person name="Takahashi Y."/>
            <person name="Horikawa H."/>
            <person name="Nakazawa H."/>
            <person name="Osonoe T."/>
            <person name="Kikuchi H."/>
            <person name="Shiba T."/>
            <person name="Sakaki Y."/>
            <person name="Hattori M."/>
        </authorList>
    </citation>
    <scope>NUCLEOTIDE SEQUENCE [LARGE SCALE GENOMIC DNA]</scope>
    <source>
        <strain>ATCC 31267 / DSM 46492 / JCM 5070 / NBRC 14893 / NCIMB 12804 / NRRL 8165 / MA-4680</strain>
    </source>
</reference>
<reference key="2">
    <citation type="journal article" date="2003" name="Nat. Biotechnol.">
        <title>Complete genome sequence and comparative analysis of the industrial microorganism Streptomyces avermitilis.</title>
        <authorList>
            <person name="Ikeda H."/>
            <person name="Ishikawa J."/>
            <person name="Hanamoto A."/>
            <person name="Shinose M."/>
            <person name="Kikuchi H."/>
            <person name="Shiba T."/>
            <person name="Sakaki Y."/>
            <person name="Hattori M."/>
            <person name="Omura S."/>
        </authorList>
    </citation>
    <scope>NUCLEOTIDE SEQUENCE [LARGE SCALE GENOMIC DNA]</scope>
    <source>
        <strain>ATCC 31267 / DSM 46492 / JCM 5070 / NBRC 14893 / NCIMB 12804 / NRRL 8165 / MA-4680</strain>
    </source>
</reference>
<reference key="3">
    <citation type="journal article" date="2007" name="Arch. Biochem. Biophys.">
        <title>Pentalenolactone biosynthesis: Molecular cloning and assignment of biochemical function to PtlF, a short-chain dehydrogenase from Streptomyces avermitilis, and identification of a new biosynthetic intermediate.</title>
        <authorList>
            <person name="You Z."/>
            <person name="Omura S."/>
            <person name="Ikeda H."/>
            <person name="Cane D.E."/>
        </authorList>
    </citation>
    <scope>FUNCTION</scope>
    <scope>CATALYTIC ACTIVITY</scope>
    <scope>BIOPHYSICOCHEMICAL PROPERTIES</scope>
    <source>
        <strain>ATCC 31267 / DSM 46492 / JCM 5070 / NBRC 14893 / NCIMB 12804 / NRRL 8165 / MA-4680</strain>
    </source>
</reference>
<reference key="4">
    <citation type="journal article" date="2011" name="Biochemistry">
        <title>Genome mining in Streptomyces. Elucidation of the role of Baeyer-Villiger monooxygenases and non-heme iron-dependent dehydrogenase/oxygenases in the final steps of the biosynthesis of pentalenolactone and neopentalenolactone.</title>
        <authorList>
            <person name="Seo M.J."/>
            <person name="Zhu D."/>
            <person name="Endo S."/>
            <person name="Ikeda H."/>
            <person name="Cane D.E."/>
        </authorList>
    </citation>
    <scope>PATHWAY</scope>
    <source>
        <strain>ATCC 31267 / DSM 46492 / JCM 5070 / NBRC 14893 / NCIMB 12804 / NRRL 8165 / MA-4680</strain>
    </source>
</reference>
<evidence type="ECO:0000250" key="1"/>
<evidence type="ECO:0000269" key="2">
    <source>
    </source>
</evidence>
<evidence type="ECO:0000269" key="3">
    <source>
    </source>
</evidence>
<evidence type="ECO:0000305" key="4"/>
<evidence type="ECO:0000305" key="5">
    <source>
    </source>
</evidence>
<keyword id="KW-0045">Antibiotic biosynthesis</keyword>
<keyword id="KW-0520">NAD</keyword>
<keyword id="KW-0560">Oxidoreductase</keyword>
<keyword id="KW-1185">Reference proteome</keyword>
<accession>Q82IY9</accession>
<comment type="function">
    <text evidence="2">Catalyzes the oxidation of 1-deoxy-11-beta-hydroxypentalenic acid to 1-deoxy-11-oxopentalenic acid in the biosynthesis of neopentalenolactone antibiotic.</text>
</comment>
<comment type="catalytic activity">
    <reaction evidence="2">
        <text>1-deoxy-11beta-hydroxypentalenate + NAD(+) = 1-deoxy-11-oxopentalenate + NADH + H(+)</text>
        <dbReference type="Rhea" id="RHEA:34559"/>
        <dbReference type="ChEBI" id="CHEBI:15378"/>
        <dbReference type="ChEBI" id="CHEBI:57540"/>
        <dbReference type="ChEBI" id="CHEBI:57945"/>
        <dbReference type="ChEBI" id="CHEBI:70779"/>
        <dbReference type="ChEBI" id="CHEBI:70780"/>
        <dbReference type="EC" id="1.1.1.340"/>
    </reaction>
</comment>
<comment type="biophysicochemical properties">
    <kinetics>
        <KM evidence="2">6.5 uM for 1-deoxy-11-beta-hydroxypentalenic acid</KM>
        <KM evidence="2">25 uM for NAD</KM>
        <text>kcat is 0.65 sec(-1).</text>
    </kinetics>
    <phDependence>
        <text evidence="2">Optimum pH is 8.0.</text>
    </phDependence>
</comment>
<comment type="pathway">
    <text evidence="3">Antibiotic biosynthesis; neopentalenolactone biosynthesis.</text>
</comment>
<comment type="miscellaneous">
    <text evidence="5">S.avermitilis does not produce pentalenolactone itself in vivo but instead a group of new metabolites that are neopentalenolactone derivatives.</text>
</comment>
<comment type="similarity">
    <text evidence="4">Belongs to the short-chain dehydrogenases/reductases (SDR) family.</text>
</comment>
<dbReference type="EC" id="1.1.1.340"/>
<dbReference type="EMBL" id="BA000030">
    <property type="protein sequence ID" value="BAC70704.1"/>
    <property type="molecule type" value="Genomic_DNA"/>
</dbReference>
<dbReference type="RefSeq" id="WP_010984424.1">
    <property type="nucleotide sequence ID" value="NZ_JZJK01000090.1"/>
</dbReference>
<dbReference type="SMR" id="Q82IY9"/>
<dbReference type="GeneID" id="41540075"/>
<dbReference type="KEGG" id="sma:SAVERM_2993"/>
<dbReference type="eggNOG" id="COG0300">
    <property type="taxonomic scope" value="Bacteria"/>
</dbReference>
<dbReference type="HOGENOM" id="CLU_010194_2_1_11"/>
<dbReference type="OrthoDB" id="4690547at2"/>
<dbReference type="BioCyc" id="MetaCyc:MONOMER-16841"/>
<dbReference type="BRENDA" id="1.1.1.340">
    <property type="organism ID" value="5980"/>
</dbReference>
<dbReference type="UniPathway" id="UPA01021"/>
<dbReference type="Proteomes" id="UP000000428">
    <property type="component" value="Chromosome"/>
</dbReference>
<dbReference type="GO" id="GO:0016616">
    <property type="term" value="F:oxidoreductase activity, acting on the CH-OH group of donors, NAD or NADP as acceptor"/>
    <property type="evidence" value="ECO:0000314"/>
    <property type="project" value="UniProtKB"/>
</dbReference>
<dbReference type="GO" id="GO:0017000">
    <property type="term" value="P:antibiotic biosynthetic process"/>
    <property type="evidence" value="ECO:0000314"/>
    <property type="project" value="UniProtKB"/>
</dbReference>
<dbReference type="GO" id="GO:1901336">
    <property type="term" value="P:lactone biosynthetic process"/>
    <property type="evidence" value="ECO:0000314"/>
    <property type="project" value="UniProtKB"/>
</dbReference>
<dbReference type="CDD" id="cd05233">
    <property type="entry name" value="SDR_c"/>
    <property type="match status" value="1"/>
</dbReference>
<dbReference type="Gene3D" id="3.40.50.720">
    <property type="entry name" value="NAD(P)-binding Rossmann-like Domain"/>
    <property type="match status" value="1"/>
</dbReference>
<dbReference type="InterPro" id="IPR054968">
    <property type="entry name" value="HdxpentlteDhPtlF"/>
</dbReference>
<dbReference type="InterPro" id="IPR036291">
    <property type="entry name" value="NAD(P)-bd_dom_sf"/>
</dbReference>
<dbReference type="InterPro" id="IPR002347">
    <property type="entry name" value="SDR_fam"/>
</dbReference>
<dbReference type="NCBIfam" id="NF045814">
    <property type="entry name" value="HdxpentlteDhPtlF"/>
    <property type="match status" value="1"/>
</dbReference>
<dbReference type="PANTHER" id="PTHR43669">
    <property type="entry name" value="5-KETO-D-GLUCONATE 5-REDUCTASE"/>
    <property type="match status" value="1"/>
</dbReference>
<dbReference type="PANTHER" id="PTHR43669:SF3">
    <property type="entry name" value="ALCOHOL DEHYDROGENASE, PUTATIVE (AFU_ORTHOLOGUE AFUA_3G03445)-RELATED"/>
    <property type="match status" value="1"/>
</dbReference>
<dbReference type="Pfam" id="PF00106">
    <property type="entry name" value="adh_short"/>
    <property type="match status" value="1"/>
</dbReference>
<dbReference type="PRINTS" id="PR00081">
    <property type="entry name" value="GDHRDH"/>
</dbReference>
<dbReference type="SMART" id="SM00822">
    <property type="entry name" value="PKS_KR"/>
    <property type="match status" value="1"/>
</dbReference>
<dbReference type="SUPFAM" id="SSF51735">
    <property type="entry name" value="NAD(P)-binding Rossmann-fold domains"/>
    <property type="match status" value="1"/>
</dbReference>
<name>PTLF_STRAW</name>
<proteinExistence type="evidence at protein level"/>
<gene>
    <name type="primary">ptlF</name>
    <name type="ordered locus">SAV_2993</name>
</gene>
<organism>
    <name type="scientific">Streptomyces avermitilis (strain ATCC 31267 / DSM 46492 / JCM 5070 / NBRC 14893 / NCIMB 12804 / NRRL 8165 / MA-4680)</name>
    <dbReference type="NCBI Taxonomy" id="227882"/>
    <lineage>
        <taxon>Bacteria</taxon>
        <taxon>Bacillati</taxon>
        <taxon>Actinomycetota</taxon>
        <taxon>Actinomycetes</taxon>
        <taxon>Kitasatosporales</taxon>
        <taxon>Streptomycetaceae</taxon>
        <taxon>Streptomyces</taxon>
    </lineage>
</organism>
<sequence length="270" mass="28161">MHLQPSTAVVTGAASGIGFALSARLAQAGARVVMTDIAGDGLAGAVEELAAHGADVTAVVADLTDPAAVQELADTAFGRLGDIDVVCNNAGVVGPVGMPLWSVPLDEMHAVFDVNYWAHVHVARAFVPRLLDSGRPSHLVQTASMSAFVVGAGTASYAASKHADLAAARSLRADLDGTPVRVSVLCPGRVDTPMTRGLVAPRNATGNTTISADEAADAVWNALGSDRFYIFTNADAQTRLGDQFNDVWRHLAREKYWTESSSPSVNSSRP</sequence>